<comment type="function">
    <text evidence="1">Catalyzes the formation of 4-diphosphocytidyl-2-C-methyl-D-erythritol from CTP and 2-C-methyl-D-erythritol 4-phosphate (MEP).</text>
</comment>
<comment type="catalytic activity">
    <reaction evidence="1">
        <text>2-C-methyl-D-erythritol 4-phosphate + CTP + H(+) = 4-CDP-2-C-methyl-D-erythritol + diphosphate</text>
        <dbReference type="Rhea" id="RHEA:13429"/>
        <dbReference type="ChEBI" id="CHEBI:15378"/>
        <dbReference type="ChEBI" id="CHEBI:33019"/>
        <dbReference type="ChEBI" id="CHEBI:37563"/>
        <dbReference type="ChEBI" id="CHEBI:57823"/>
        <dbReference type="ChEBI" id="CHEBI:58262"/>
        <dbReference type="EC" id="2.7.7.60"/>
    </reaction>
</comment>
<comment type="pathway">
    <text evidence="1">Isoprenoid biosynthesis; isopentenyl diphosphate biosynthesis via DXP pathway; isopentenyl diphosphate from 1-deoxy-D-xylulose 5-phosphate: step 2/6.</text>
</comment>
<comment type="similarity">
    <text evidence="1">Belongs to the IspD/TarI cytidylyltransferase family. IspD subfamily.</text>
</comment>
<accession>B5EMB5</accession>
<keyword id="KW-0414">Isoprene biosynthesis</keyword>
<keyword id="KW-0548">Nucleotidyltransferase</keyword>
<keyword id="KW-0808">Transferase</keyword>
<name>ISPD_ACIF5</name>
<reference key="1">
    <citation type="submission" date="2008-08" db="EMBL/GenBank/DDBJ databases">
        <title>Complete sequence of Acidithiobacillus ferrooxidans ATCC 53993.</title>
        <authorList>
            <person name="Lucas S."/>
            <person name="Copeland A."/>
            <person name="Lapidus A."/>
            <person name="Glavina del Rio T."/>
            <person name="Dalin E."/>
            <person name="Tice H."/>
            <person name="Bruce D."/>
            <person name="Goodwin L."/>
            <person name="Pitluck S."/>
            <person name="Sims D."/>
            <person name="Brettin T."/>
            <person name="Detter J.C."/>
            <person name="Han C."/>
            <person name="Kuske C.R."/>
            <person name="Larimer F."/>
            <person name="Land M."/>
            <person name="Hauser L."/>
            <person name="Kyrpides N."/>
            <person name="Lykidis A."/>
            <person name="Borole A.P."/>
        </authorList>
    </citation>
    <scope>NUCLEOTIDE SEQUENCE [LARGE SCALE GENOMIC DNA]</scope>
    <source>
        <strain>ATCC 53993 / BNL-5-31</strain>
    </source>
</reference>
<feature type="chain" id="PRO_1000094305" description="2-C-methyl-D-erythritol 4-phosphate cytidylyltransferase">
    <location>
        <begin position="1"/>
        <end position="237"/>
    </location>
</feature>
<feature type="site" description="Transition state stabilizer" evidence="1">
    <location>
        <position position="16"/>
    </location>
</feature>
<feature type="site" description="Transition state stabilizer" evidence="1">
    <location>
        <position position="23"/>
    </location>
</feature>
<feature type="site" description="Positions MEP for the nucleophilic attack" evidence="1">
    <location>
        <position position="160"/>
    </location>
</feature>
<feature type="site" description="Positions MEP for the nucleophilic attack" evidence="1">
    <location>
        <position position="216"/>
    </location>
</feature>
<dbReference type="EC" id="2.7.7.60" evidence="1"/>
<dbReference type="EMBL" id="CP001132">
    <property type="protein sequence ID" value="ACH82794.1"/>
    <property type="molecule type" value="Genomic_DNA"/>
</dbReference>
<dbReference type="RefSeq" id="WP_012536113.1">
    <property type="nucleotide sequence ID" value="NC_011206.1"/>
</dbReference>
<dbReference type="SMR" id="B5EMB5"/>
<dbReference type="GeneID" id="65279747"/>
<dbReference type="KEGG" id="afe:Lferr_0540"/>
<dbReference type="eggNOG" id="COG1211">
    <property type="taxonomic scope" value="Bacteria"/>
</dbReference>
<dbReference type="HOGENOM" id="CLU_061281_3_0_6"/>
<dbReference type="UniPathway" id="UPA00056">
    <property type="reaction ID" value="UER00093"/>
</dbReference>
<dbReference type="GO" id="GO:0050518">
    <property type="term" value="F:2-C-methyl-D-erythritol 4-phosphate cytidylyltransferase activity"/>
    <property type="evidence" value="ECO:0007669"/>
    <property type="project" value="UniProtKB-UniRule"/>
</dbReference>
<dbReference type="GO" id="GO:0019288">
    <property type="term" value="P:isopentenyl diphosphate biosynthetic process, methylerythritol 4-phosphate pathway"/>
    <property type="evidence" value="ECO:0007669"/>
    <property type="project" value="UniProtKB-UniRule"/>
</dbReference>
<dbReference type="CDD" id="cd02516">
    <property type="entry name" value="CDP-ME_synthetase"/>
    <property type="match status" value="1"/>
</dbReference>
<dbReference type="FunFam" id="3.90.550.10:FF:000003">
    <property type="entry name" value="2-C-methyl-D-erythritol 4-phosphate cytidylyltransferase"/>
    <property type="match status" value="1"/>
</dbReference>
<dbReference type="Gene3D" id="3.90.550.10">
    <property type="entry name" value="Spore Coat Polysaccharide Biosynthesis Protein SpsA, Chain A"/>
    <property type="match status" value="1"/>
</dbReference>
<dbReference type="HAMAP" id="MF_00108">
    <property type="entry name" value="IspD"/>
    <property type="match status" value="1"/>
</dbReference>
<dbReference type="InterPro" id="IPR001228">
    <property type="entry name" value="IspD"/>
</dbReference>
<dbReference type="InterPro" id="IPR034683">
    <property type="entry name" value="IspD/TarI"/>
</dbReference>
<dbReference type="InterPro" id="IPR050088">
    <property type="entry name" value="IspD/TarI_cytidylyltransf_bact"/>
</dbReference>
<dbReference type="InterPro" id="IPR018294">
    <property type="entry name" value="ISPD_synthase_CS"/>
</dbReference>
<dbReference type="InterPro" id="IPR029044">
    <property type="entry name" value="Nucleotide-diphossugar_trans"/>
</dbReference>
<dbReference type="NCBIfam" id="TIGR00453">
    <property type="entry name" value="ispD"/>
    <property type="match status" value="1"/>
</dbReference>
<dbReference type="PANTHER" id="PTHR32125">
    <property type="entry name" value="2-C-METHYL-D-ERYTHRITOL 4-PHOSPHATE CYTIDYLYLTRANSFERASE, CHLOROPLASTIC"/>
    <property type="match status" value="1"/>
</dbReference>
<dbReference type="PANTHER" id="PTHR32125:SF4">
    <property type="entry name" value="2-C-METHYL-D-ERYTHRITOL 4-PHOSPHATE CYTIDYLYLTRANSFERASE, CHLOROPLASTIC"/>
    <property type="match status" value="1"/>
</dbReference>
<dbReference type="Pfam" id="PF01128">
    <property type="entry name" value="IspD"/>
    <property type="match status" value="1"/>
</dbReference>
<dbReference type="SUPFAM" id="SSF53448">
    <property type="entry name" value="Nucleotide-diphospho-sugar transferases"/>
    <property type="match status" value="1"/>
</dbReference>
<dbReference type="PROSITE" id="PS01295">
    <property type="entry name" value="ISPD"/>
    <property type="match status" value="1"/>
</dbReference>
<organism>
    <name type="scientific">Acidithiobacillus ferrooxidans (strain ATCC 53993 / BNL-5-31)</name>
    <name type="common">Leptospirillum ferrooxidans (ATCC 53993)</name>
    <dbReference type="NCBI Taxonomy" id="380394"/>
    <lineage>
        <taxon>Bacteria</taxon>
        <taxon>Pseudomonadati</taxon>
        <taxon>Pseudomonadota</taxon>
        <taxon>Acidithiobacillia</taxon>
        <taxon>Acidithiobacillales</taxon>
        <taxon>Acidithiobacillaceae</taxon>
        <taxon>Acidithiobacillus</taxon>
    </lineage>
</organism>
<proteinExistence type="inferred from homology"/>
<protein>
    <recommendedName>
        <fullName evidence="1">2-C-methyl-D-erythritol 4-phosphate cytidylyltransferase</fullName>
        <ecNumber evidence="1">2.7.7.60</ecNumber>
    </recommendedName>
    <alternativeName>
        <fullName evidence="1">4-diphosphocytidyl-2C-methyl-D-erythritol synthase</fullName>
    </alternativeName>
    <alternativeName>
        <fullName evidence="1">MEP cytidylyltransferase</fullName>
        <shortName evidence="1">MCT</shortName>
    </alternativeName>
</protein>
<gene>
    <name evidence="1" type="primary">ispD</name>
    <name type="ordered locus">Lferr_0540</name>
</gene>
<evidence type="ECO:0000255" key="1">
    <source>
        <dbReference type="HAMAP-Rule" id="MF_00108"/>
    </source>
</evidence>
<sequence>MERVWVVIPAGGRGQRFGAAQAKQYVLLRDRPVIAHTLAAFLGEPRIAGIQLVLPGEDIATGAWRELLGPMPAPLLPPVVGGGLRADSVRLGLEALLRQGAVPSDWVLVHDAARPCLRREDLLRLLESLANAPQGALLAVPVADTLKRGEDGCSSGTVDREGLWRALTPQAFPLGALLAALEAARAGNRQITDEASAMEAQGWRPRLIPGHGDNIKVTLSDDLMLAAAILAARSEEG</sequence>